<dbReference type="EC" id="2.1.1.197" evidence="1"/>
<dbReference type="EMBL" id="AE009952">
    <property type="protein sequence ID" value="AAM86580.1"/>
    <property type="molecule type" value="Genomic_DNA"/>
</dbReference>
<dbReference type="EMBL" id="AE017042">
    <property type="protein sequence ID" value="AAS61258.1"/>
    <property type="molecule type" value="Genomic_DNA"/>
</dbReference>
<dbReference type="EMBL" id="AL590842">
    <property type="protein sequence ID" value="CAL19817.1"/>
    <property type="molecule type" value="Genomic_DNA"/>
</dbReference>
<dbReference type="PIR" id="AG0141">
    <property type="entry name" value="AG0141"/>
</dbReference>
<dbReference type="RefSeq" id="WP_002210764.1">
    <property type="nucleotide sequence ID" value="NZ_WUCK01000013.1"/>
</dbReference>
<dbReference type="RefSeq" id="YP_002346192.1">
    <property type="nucleotide sequence ID" value="NC_003143.1"/>
</dbReference>
<dbReference type="SMR" id="Q7CH67"/>
<dbReference type="STRING" id="214092.YPO1153"/>
<dbReference type="PaxDb" id="214092-YPO1153"/>
<dbReference type="DNASU" id="1147976"/>
<dbReference type="EnsemblBacteria" id="AAS61258">
    <property type="protein sequence ID" value="AAS61258"/>
    <property type="gene ID" value="YP_1007"/>
</dbReference>
<dbReference type="GeneID" id="57977292"/>
<dbReference type="KEGG" id="ype:YPO1153"/>
<dbReference type="KEGG" id="ypk:y3029"/>
<dbReference type="KEGG" id="ypm:YP_1007"/>
<dbReference type="PATRIC" id="fig|214092.21.peg.1448"/>
<dbReference type="eggNOG" id="COG2226">
    <property type="taxonomic scope" value="Bacteria"/>
</dbReference>
<dbReference type="HOGENOM" id="CLU_046586_2_2_6"/>
<dbReference type="OMA" id="SWQAVDG"/>
<dbReference type="OrthoDB" id="9760689at2"/>
<dbReference type="UniPathway" id="UPA00078"/>
<dbReference type="Proteomes" id="UP000000815">
    <property type="component" value="Chromosome"/>
</dbReference>
<dbReference type="Proteomes" id="UP000001019">
    <property type="component" value="Chromosome"/>
</dbReference>
<dbReference type="Proteomes" id="UP000002490">
    <property type="component" value="Chromosome"/>
</dbReference>
<dbReference type="GO" id="GO:0010340">
    <property type="term" value="F:carboxyl-O-methyltransferase activity"/>
    <property type="evidence" value="ECO:0007669"/>
    <property type="project" value="UniProtKB-UniRule"/>
</dbReference>
<dbReference type="GO" id="GO:0102130">
    <property type="term" value="F:malonyl-CoA methyltransferase activity"/>
    <property type="evidence" value="ECO:0007669"/>
    <property type="project" value="UniProtKB-EC"/>
</dbReference>
<dbReference type="GO" id="GO:0008168">
    <property type="term" value="F:methyltransferase activity"/>
    <property type="evidence" value="ECO:0000318"/>
    <property type="project" value="GO_Central"/>
</dbReference>
<dbReference type="GO" id="GO:0008757">
    <property type="term" value="F:S-adenosylmethionine-dependent methyltransferase activity"/>
    <property type="evidence" value="ECO:0007669"/>
    <property type="project" value="InterPro"/>
</dbReference>
<dbReference type="GO" id="GO:0009102">
    <property type="term" value="P:biotin biosynthetic process"/>
    <property type="evidence" value="ECO:0007669"/>
    <property type="project" value="UniProtKB-UniRule"/>
</dbReference>
<dbReference type="GO" id="GO:0032259">
    <property type="term" value="P:methylation"/>
    <property type="evidence" value="ECO:0007669"/>
    <property type="project" value="UniProtKB-KW"/>
</dbReference>
<dbReference type="CDD" id="cd02440">
    <property type="entry name" value="AdoMet_MTases"/>
    <property type="match status" value="1"/>
</dbReference>
<dbReference type="Gene3D" id="3.40.50.150">
    <property type="entry name" value="Vaccinia Virus protein VP39"/>
    <property type="match status" value="1"/>
</dbReference>
<dbReference type="HAMAP" id="MF_00835">
    <property type="entry name" value="BioC"/>
    <property type="match status" value="1"/>
</dbReference>
<dbReference type="InterPro" id="IPR011814">
    <property type="entry name" value="BioC"/>
</dbReference>
<dbReference type="InterPro" id="IPR013216">
    <property type="entry name" value="Methyltransf_11"/>
</dbReference>
<dbReference type="InterPro" id="IPR029063">
    <property type="entry name" value="SAM-dependent_MTases_sf"/>
</dbReference>
<dbReference type="NCBIfam" id="TIGR02072">
    <property type="entry name" value="BioC"/>
    <property type="match status" value="1"/>
</dbReference>
<dbReference type="PANTHER" id="PTHR43464:SF94">
    <property type="entry name" value="MALONYL-[ACYL-CARRIER PROTEIN] O-METHYLTRANSFERASE"/>
    <property type="match status" value="1"/>
</dbReference>
<dbReference type="PANTHER" id="PTHR43464">
    <property type="entry name" value="METHYLTRANSFERASE"/>
    <property type="match status" value="1"/>
</dbReference>
<dbReference type="Pfam" id="PF08241">
    <property type="entry name" value="Methyltransf_11"/>
    <property type="match status" value="1"/>
</dbReference>
<dbReference type="SUPFAM" id="SSF53335">
    <property type="entry name" value="S-adenosyl-L-methionine-dependent methyltransferases"/>
    <property type="match status" value="1"/>
</dbReference>
<feature type="chain" id="PRO_0000412525" description="Malonyl-[acyl-carrier protein] O-methyltransferase">
    <location>
        <begin position="1"/>
        <end position="267"/>
    </location>
</feature>
<accession>Q7CH67</accession>
<accession>Q74W82</accession>
<organism>
    <name type="scientific">Yersinia pestis</name>
    <dbReference type="NCBI Taxonomy" id="632"/>
    <lineage>
        <taxon>Bacteria</taxon>
        <taxon>Pseudomonadati</taxon>
        <taxon>Pseudomonadota</taxon>
        <taxon>Gammaproteobacteria</taxon>
        <taxon>Enterobacterales</taxon>
        <taxon>Yersiniaceae</taxon>
        <taxon>Yersinia</taxon>
    </lineage>
</organism>
<reference key="1">
    <citation type="journal article" date="2002" name="J. Bacteriol.">
        <title>Genome sequence of Yersinia pestis KIM.</title>
        <authorList>
            <person name="Deng W."/>
            <person name="Burland V."/>
            <person name="Plunkett G. III"/>
            <person name="Boutin A."/>
            <person name="Mayhew G.F."/>
            <person name="Liss P."/>
            <person name="Perna N.T."/>
            <person name="Rose D.J."/>
            <person name="Mau B."/>
            <person name="Zhou S."/>
            <person name="Schwartz D.C."/>
            <person name="Fetherston J.D."/>
            <person name="Lindler L.E."/>
            <person name="Brubaker R.R."/>
            <person name="Plano G.V."/>
            <person name="Straley S.C."/>
            <person name="McDonough K.A."/>
            <person name="Nilles M.L."/>
            <person name="Matson J.S."/>
            <person name="Blattner F.R."/>
            <person name="Perry R.D."/>
        </authorList>
    </citation>
    <scope>NUCLEOTIDE SEQUENCE [LARGE SCALE GENOMIC DNA]</scope>
    <source>
        <strain>KIM10+ / Biovar Mediaevalis</strain>
    </source>
</reference>
<reference key="2">
    <citation type="journal article" date="2001" name="Nature">
        <title>Genome sequence of Yersinia pestis, the causative agent of plague.</title>
        <authorList>
            <person name="Parkhill J."/>
            <person name="Wren B.W."/>
            <person name="Thomson N.R."/>
            <person name="Titball R.W."/>
            <person name="Holden M.T.G."/>
            <person name="Prentice M.B."/>
            <person name="Sebaihia M."/>
            <person name="James K.D."/>
            <person name="Churcher C.M."/>
            <person name="Mungall K.L."/>
            <person name="Baker S."/>
            <person name="Basham D."/>
            <person name="Bentley S.D."/>
            <person name="Brooks K."/>
            <person name="Cerdeno-Tarraga A.-M."/>
            <person name="Chillingworth T."/>
            <person name="Cronin A."/>
            <person name="Davies R.M."/>
            <person name="Davis P."/>
            <person name="Dougan G."/>
            <person name="Feltwell T."/>
            <person name="Hamlin N."/>
            <person name="Holroyd S."/>
            <person name="Jagels K."/>
            <person name="Karlyshev A.V."/>
            <person name="Leather S."/>
            <person name="Moule S."/>
            <person name="Oyston P.C.F."/>
            <person name="Quail M.A."/>
            <person name="Rutherford K.M."/>
            <person name="Simmonds M."/>
            <person name="Skelton J."/>
            <person name="Stevens K."/>
            <person name="Whitehead S."/>
            <person name="Barrell B.G."/>
        </authorList>
    </citation>
    <scope>NUCLEOTIDE SEQUENCE [LARGE SCALE GENOMIC DNA]</scope>
    <source>
        <strain>CO-92 / Biovar Orientalis</strain>
    </source>
</reference>
<reference key="3">
    <citation type="journal article" date="2004" name="DNA Res.">
        <title>Complete genome sequence of Yersinia pestis strain 91001, an isolate avirulent to humans.</title>
        <authorList>
            <person name="Song Y."/>
            <person name="Tong Z."/>
            <person name="Wang J."/>
            <person name="Wang L."/>
            <person name="Guo Z."/>
            <person name="Han Y."/>
            <person name="Zhang J."/>
            <person name="Pei D."/>
            <person name="Zhou D."/>
            <person name="Qin H."/>
            <person name="Pang X."/>
            <person name="Han Y."/>
            <person name="Zhai J."/>
            <person name="Li M."/>
            <person name="Cui B."/>
            <person name="Qi Z."/>
            <person name="Jin L."/>
            <person name="Dai R."/>
            <person name="Chen F."/>
            <person name="Li S."/>
            <person name="Ye C."/>
            <person name="Du Z."/>
            <person name="Lin W."/>
            <person name="Wang J."/>
            <person name="Yu J."/>
            <person name="Yang H."/>
            <person name="Wang J."/>
            <person name="Huang P."/>
            <person name="Yang R."/>
        </authorList>
    </citation>
    <scope>NUCLEOTIDE SEQUENCE [LARGE SCALE GENOMIC DNA]</scope>
    <source>
        <strain>91001 / Biovar Mediaevalis</strain>
    </source>
</reference>
<name>BIOC_YERPE</name>
<protein>
    <recommendedName>
        <fullName evidence="1">Malonyl-[acyl-carrier protein] O-methyltransferase</fullName>
        <shortName evidence="1">Malonyl-ACP O-methyltransferase</shortName>
        <ecNumber evidence="1">2.1.1.197</ecNumber>
    </recommendedName>
    <alternativeName>
        <fullName evidence="1">Biotin synthesis protein BioC</fullName>
    </alternativeName>
</protein>
<comment type="function">
    <text evidence="1">Converts the free carboxyl group of a malonyl-thioester to its methyl ester by transfer of a methyl group from S-adenosyl-L-methionine (SAM). It allows to synthesize pimeloyl-ACP via the fatty acid synthetic pathway.</text>
</comment>
<comment type="catalytic activity">
    <reaction evidence="1">
        <text>malonyl-[ACP] + S-adenosyl-L-methionine = malonyl-[ACP] methyl ester + S-adenosyl-L-homocysteine</text>
        <dbReference type="Rhea" id="RHEA:17105"/>
        <dbReference type="Rhea" id="RHEA-COMP:9623"/>
        <dbReference type="Rhea" id="RHEA-COMP:9954"/>
        <dbReference type="ChEBI" id="CHEBI:57856"/>
        <dbReference type="ChEBI" id="CHEBI:59789"/>
        <dbReference type="ChEBI" id="CHEBI:78449"/>
        <dbReference type="ChEBI" id="CHEBI:78845"/>
        <dbReference type="EC" id="2.1.1.197"/>
    </reaction>
</comment>
<comment type="pathway">
    <text evidence="1">Cofactor biosynthesis; biotin biosynthesis.</text>
</comment>
<comment type="similarity">
    <text evidence="1">Belongs to the methyltransferase superfamily.</text>
</comment>
<evidence type="ECO:0000255" key="1">
    <source>
        <dbReference type="HAMAP-Rule" id="MF_00835"/>
    </source>
</evidence>
<keyword id="KW-0093">Biotin biosynthesis</keyword>
<keyword id="KW-0489">Methyltransferase</keyword>
<keyword id="KW-1185">Reference proteome</keyword>
<keyword id="KW-0949">S-adenosyl-L-methionine</keyword>
<keyword id="KW-0808">Transferase</keyword>
<gene>
    <name evidence="1" type="primary">bioC</name>
    <name type="ordered locus">YPO1153</name>
    <name type="ordered locus">y3029</name>
    <name type="ordered locus">YP_1007</name>
</gene>
<proteinExistence type="inferred from homology"/>
<sequence>MASVTEHAQWGVGCLPPLNVDKQAIAAAFSRAAESYDSAANLQRETGHRLVQLGQQHTGFVVLDAGCGTGHFSQHWRLLGKRVIALDLAAGMLDYARQQQVADDYLLGDIEHIPLPDQSVDICFSNLAVQWCSDLGAALSEFYRVTRPGGIILFSTLAEGSLDELGQAWQQVDGQRHVNDFLPLQHIQTACQYYRHHLTTALYQPRFPNVIALMRSLQGIGATHLHHGRQAGLQGRQRLAALQRAYVMQSGGYPLSYHMVYGVIYRD</sequence>